<accession>A0A0K8RDH6</accession>
<protein>
    <recommendedName>
        <fullName evidence="5">Evasin P1074</fullName>
    </recommendedName>
</protein>
<comment type="function">
    <text evidence="4">Salivary chemokine-binding protein which binds to host chemokines CXCL1 and CXCL8.</text>
</comment>
<comment type="subcellular location">
    <subcellularLocation>
        <location evidence="6">Secreted</location>
    </subcellularLocation>
</comment>
<organism evidence="7">
    <name type="scientific">Ixodes ricinus</name>
    <name type="common">Common tick</name>
    <name type="synonym">Acarus ricinus</name>
    <dbReference type="NCBI Taxonomy" id="34613"/>
    <lineage>
        <taxon>Eukaryota</taxon>
        <taxon>Metazoa</taxon>
        <taxon>Ecdysozoa</taxon>
        <taxon>Arthropoda</taxon>
        <taxon>Chelicerata</taxon>
        <taxon>Arachnida</taxon>
        <taxon>Acari</taxon>
        <taxon>Parasitiformes</taxon>
        <taxon>Ixodida</taxon>
        <taxon>Ixodoidea</taxon>
        <taxon>Ixodidae</taxon>
        <taxon>Ixodinae</taxon>
        <taxon>Ixodes</taxon>
    </lineage>
</organism>
<name>E1074_IXORI</name>
<feature type="signal peptide" evidence="2">
    <location>
        <begin position="1"/>
        <end position="28"/>
    </location>
</feature>
<feature type="chain" id="PRO_5005517588" description="Evasin P1074" evidence="2">
    <location>
        <begin position="29"/>
        <end position="96"/>
    </location>
</feature>
<feature type="glycosylation site" description="N-linked (GlcNAc...) asparagine" evidence="3">
    <location>
        <position position="74"/>
    </location>
</feature>
<feature type="disulfide bond" evidence="1">
    <location>
        <begin position="48"/>
        <end position="67"/>
    </location>
</feature>
<feature type="disulfide bond" evidence="1">
    <location>
        <begin position="52"/>
        <end position="69"/>
    </location>
</feature>
<feature type="disulfide bond" evidence="1">
    <location>
        <begin position="63"/>
        <end position="80"/>
    </location>
</feature>
<evidence type="ECO:0000250" key="1">
    <source>
        <dbReference type="UniProtKB" id="P0C8E8"/>
    </source>
</evidence>
<evidence type="ECO:0000255" key="2"/>
<evidence type="ECO:0000255" key="3">
    <source>
        <dbReference type="PROSITE-ProRule" id="PRU00498"/>
    </source>
</evidence>
<evidence type="ECO:0000269" key="4">
    <source>
    </source>
</evidence>
<evidence type="ECO:0000303" key="5">
    <source>
    </source>
</evidence>
<evidence type="ECO:0000305" key="6"/>
<evidence type="ECO:0000312" key="7">
    <source>
        <dbReference type="EMBL" id="JAA69185.1"/>
    </source>
</evidence>
<sequence length="96" mass="10622">MAFNMITFLQMAVFVVILFNINLHSASAGSKESSAHQSSDDSIKAEFCDAKCTMKTDGKWTQCHGGCFCVHVGNETEGRCMRLDGDYDYPSTQPEE</sequence>
<dbReference type="EMBL" id="GADI01004623">
    <property type="protein sequence ID" value="JAA69185.1"/>
    <property type="molecule type" value="mRNA"/>
</dbReference>
<dbReference type="SMR" id="A0A0K8RDH6"/>
<dbReference type="GO" id="GO:0005576">
    <property type="term" value="C:extracellular region"/>
    <property type="evidence" value="ECO:0007669"/>
    <property type="project" value="UniProtKB-SubCell"/>
</dbReference>
<dbReference type="GO" id="GO:0019958">
    <property type="term" value="F:C-X-C chemokine binding"/>
    <property type="evidence" value="ECO:0000314"/>
    <property type="project" value="UniProtKB"/>
</dbReference>
<proteinExistence type="inferred from homology"/>
<keyword id="KW-1015">Disulfide bond</keyword>
<keyword id="KW-0325">Glycoprotein</keyword>
<keyword id="KW-0964">Secreted</keyword>
<keyword id="KW-0732">Signal</keyword>
<reference evidence="7" key="1">
    <citation type="journal article" date="2013" name="FASEB J.">
        <title>De novo Ixodes ricinus salivary gland transcriptome analysis using two next-generation sequencing methodologies.</title>
        <authorList>
            <person name="Schwarz A."/>
            <person name="von Reumont B.M."/>
            <person name="Erhart J."/>
            <person name="Chagas A.C."/>
            <person name="Ribeiro J.M."/>
            <person name="Kotsyfakis M."/>
        </authorList>
    </citation>
    <scope>NUCLEOTIDE SEQUENCE [LARGE SCALE MRNA]</scope>
    <source>
        <tissue evidence="7">Salivary gland</tissue>
    </source>
</reference>
<reference evidence="6" key="2">
    <citation type="journal article" date="2019" name="J. Biol. Chem.">
        <title>A knottin scaffold directs the CXC-chemokine-binding specificity of tick evasins.</title>
        <authorList>
            <person name="Lee A.W."/>
            <person name="Deruaz M."/>
            <person name="Lynch C."/>
            <person name="Davies G."/>
            <person name="Singh K."/>
            <person name="Alenazi Y."/>
            <person name="Eaton J.R.O."/>
            <person name="Kawamura A."/>
            <person name="Shaw J."/>
            <person name="Proudfoot A.E.I."/>
            <person name="Dias J.M."/>
            <person name="Bhattacharya S."/>
        </authorList>
    </citation>
    <scope>FUNCTION</scope>
</reference>